<comment type="function">
    <molecule>Corticotropin</molecule>
    <text>Stimulates the adrenal glands to release cortisol.</text>
</comment>
<comment type="function">
    <molecule>Melanocyte-stimulating hormone alpha</molecule>
    <text>Anorexigenic peptide. Increases the pigmentation of skin by increasing melanin production in melanocytes.</text>
</comment>
<comment type="function">
    <molecule>Melanocyte-stimulating hormone beta</molecule>
    <text>Increases the pigmentation of skin by increasing melanin production in melanocytes.</text>
</comment>
<comment type="function">
    <molecule>Beta-endorphin</molecule>
    <text>Endogenous orexigenic opiate.</text>
</comment>
<comment type="function">
    <molecule>Met-enkephalin</molecule>
    <text>Endogenous opiate.</text>
</comment>
<comment type="subcellular location">
    <subcellularLocation>
        <location evidence="1">Secreted</location>
    </subcellularLocation>
    <text evidence="1">Melanocyte-stimulating hormone alpha and beta-endorphin are stored in separate granules in hypothalamic POMC neurons, suggesting that secretion may be under the control of different regulatory mechanisms.</text>
</comment>
<comment type="PTM">
    <text>Specific enzymatic cleavages at paired basic residues yield the different active peptides.</text>
</comment>
<comment type="similarity">
    <text evidence="4">Belongs to the POMC family.</text>
</comment>
<feature type="signal peptide" evidence="2">
    <location>
        <begin position="1"/>
        <end position="18"/>
    </location>
</feature>
<feature type="propeptide" id="PRO_0000025113">
    <location>
        <begin position="19"/>
        <end position="90"/>
    </location>
</feature>
<feature type="peptide" id="PRO_0000025114" description="Corticotropin">
    <location>
        <begin position="93"/>
        <end position="132"/>
    </location>
</feature>
<feature type="peptide" id="PRO_0000025115" description="Melanocyte-stimulating hormone alpha">
    <location>
        <begin position="93"/>
        <end position="107"/>
    </location>
</feature>
<feature type="peptide" id="PRO_0000025116" description="Corticotropin-like intermediary peptide">
    <location>
        <begin position="111"/>
        <end position="132"/>
    </location>
</feature>
<feature type="peptide" id="PRO_0000025117" description="Lipotropin beta">
    <location>
        <begin position="136"/>
        <end position="222"/>
    </location>
</feature>
<feature type="peptide" id="PRO_0000025118" description="Lipotropin gamma">
    <location>
        <begin position="136"/>
        <end position="188"/>
    </location>
</feature>
<feature type="peptide" id="PRO_0000025119" description="Melanocyte-stimulating hormone beta">
    <location>
        <begin position="172"/>
        <end position="188"/>
    </location>
</feature>
<feature type="peptide" id="PRO_0000025120" description="Beta-endorphin">
    <location>
        <begin position="191"/>
        <end position="222"/>
    </location>
</feature>
<feature type="peptide" id="PRO_0000025121" description="Met-enkephalin">
    <location>
        <begin position="191"/>
        <end position="195"/>
    </location>
</feature>
<feature type="region of interest" description="Disordered" evidence="3">
    <location>
        <begin position="56"/>
        <end position="98"/>
    </location>
</feature>
<feature type="region of interest" description="Disordered" evidence="3">
    <location>
        <begin position="148"/>
        <end position="170"/>
    </location>
</feature>
<feature type="compositionally biased region" description="Low complexity" evidence="3">
    <location>
        <begin position="70"/>
        <end position="93"/>
    </location>
</feature>
<feature type="compositionally biased region" description="Acidic residues" evidence="3">
    <location>
        <begin position="148"/>
        <end position="162"/>
    </location>
</feature>
<name>COLI_THUOB</name>
<protein>
    <recommendedName>
        <fullName>Pro-opiomelanocortin</fullName>
        <shortName>POMC</shortName>
    </recommendedName>
    <alternativeName>
        <fullName>Corticotropin-lipotropin</fullName>
    </alternativeName>
    <component>
        <recommendedName>
            <fullName>Corticotropin</fullName>
        </recommendedName>
        <alternativeName>
            <fullName>Adrenocorticotropic hormone</fullName>
            <shortName>ACTH</shortName>
        </alternativeName>
    </component>
    <component>
        <recommendedName>
            <fullName>Melanocyte-stimulating hormone alpha</fullName>
            <shortName>Alpha-MSH</shortName>
        </recommendedName>
        <alternativeName>
            <fullName>Melanotropin alpha</fullName>
        </alternativeName>
    </component>
    <component>
        <recommendedName>
            <fullName>Corticotropin-like intermediary peptide</fullName>
            <shortName>CLIP</shortName>
        </recommendedName>
    </component>
    <component>
        <recommendedName>
            <fullName>Lipotropin beta</fullName>
        </recommendedName>
        <alternativeName>
            <fullName>Beta-LPH</fullName>
        </alternativeName>
    </component>
    <component>
        <recommendedName>
            <fullName>Lipotropin gamma</fullName>
        </recommendedName>
        <alternativeName>
            <fullName>Gamma-LPH</fullName>
        </alternativeName>
    </component>
    <component>
        <recommendedName>
            <fullName>Melanocyte-stimulating hormone beta</fullName>
            <shortName>Beta-MSH</shortName>
        </recommendedName>
        <alternativeName>
            <fullName>Melanotropin beta</fullName>
        </alternativeName>
    </component>
    <component>
        <recommendedName>
            <fullName>Beta-endorphin</fullName>
        </recommendedName>
    </component>
    <component>
        <recommendedName>
            <fullName>Met-enkephalin</fullName>
        </recommendedName>
    </component>
</protein>
<dbReference type="EMBL" id="AB020971">
    <property type="protein sequence ID" value="BAA35125.1"/>
    <property type="molecule type" value="mRNA"/>
</dbReference>
<dbReference type="GO" id="GO:0005576">
    <property type="term" value="C:extracellular region"/>
    <property type="evidence" value="ECO:0007669"/>
    <property type="project" value="UniProtKB-SubCell"/>
</dbReference>
<dbReference type="GO" id="GO:0005184">
    <property type="term" value="F:neuropeptide hormone activity"/>
    <property type="evidence" value="ECO:0007669"/>
    <property type="project" value="TreeGrafter"/>
</dbReference>
<dbReference type="GO" id="GO:0007218">
    <property type="term" value="P:neuropeptide signaling pathway"/>
    <property type="evidence" value="ECO:0007669"/>
    <property type="project" value="UniProtKB-KW"/>
</dbReference>
<dbReference type="InterPro" id="IPR013531">
    <property type="entry name" value="Mcrtin_ACTH_cent"/>
</dbReference>
<dbReference type="InterPro" id="IPR013593">
    <property type="entry name" value="Melanocortin_N"/>
</dbReference>
<dbReference type="InterPro" id="IPR013532">
    <property type="entry name" value="Opioid_neuropept"/>
</dbReference>
<dbReference type="InterPro" id="IPR001941">
    <property type="entry name" value="PMOC"/>
</dbReference>
<dbReference type="InterPro" id="IPR050878">
    <property type="entry name" value="POMC-derived_peptides"/>
</dbReference>
<dbReference type="PANTHER" id="PTHR11416">
    <property type="entry name" value="PRO-OPIOMELANOCORTIN"/>
    <property type="match status" value="1"/>
</dbReference>
<dbReference type="PANTHER" id="PTHR11416:SF7">
    <property type="entry name" value="PRO-OPIOMELANOCORTIN"/>
    <property type="match status" value="1"/>
</dbReference>
<dbReference type="Pfam" id="PF00976">
    <property type="entry name" value="ACTH_domain"/>
    <property type="match status" value="2"/>
</dbReference>
<dbReference type="Pfam" id="PF08384">
    <property type="entry name" value="NPP"/>
    <property type="match status" value="1"/>
</dbReference>
<dbReference type="Pfam" id="PF08035">
    <property type="entry name" value="Op_neuropeptide"/>
    <property type="match status" value="1"/>
</dbReference>
<dbReference type="PRINTS" id="PR00383">
    <property type="entry name" value="MELANOCORTIN"/>
</dbReference>
<dbReference type="SMART" id="SM01363">
    <property type="entry name" value="ACTH_domain"/>
    <property type="match status" value="2"/>
</dbReference>
<dbReference type="SMART" id="SM01364">
    <property type="entry name" value="NPP"/>
    <property type="match status" value="1"/>
</dbReference>
<dbReference type="SMART" id="SM01365">
    <property type="entry name" value="Op_neuropeptide"/>
    <property type="match status" value="1"/>
</dbReference>
<keyword id="KW-0165">Cleavage on pair of basic residues</keyword>
<keyword id="KW-0257">Endorphin</keyword>
<keyword id="KW-0372">Hormone</keyword>
<keyword id="KW-0964">Secreted</keyword>
<keyword id="KW-0732">Signal</keyword>
<accession>Q9YGK2</accession>
<gene>
    <name type="primary">pomc</name>
</gene>
<sequence>MCPVWLLVAVVVVGGSRGAVSQCWEHPSCQELNSDSSMMECIQLCHSDLTAEKPVIPGNAHLQPPPLPDPSSSSSFILPSSSSSSSSPQSKRSYSMEHFRWGKPVGRKRRPVKVYTSNGVEEESAEVFPGEMRRRELASELLAAAEEEEEKAQEVMAEEEEEQKQLLQEKKDGSYKMKHFRWSGPPASKRYGGFMKSWDERSQRPLLTLFKNVINKDGQQQK</sequence>
<reference key="1">
    <citation type="submission" date="1998-12" db="EMBL/GenBank/DDBJ databases">
        <title>Tuna proopiomelanocortin cDNA.</title>
        <authorList>
            <person name="Amemiya Y."/>
            <person name="Takahashi A."/>
            <person name="Kawauchi H."/>
        </authorList>
    </citation>
    <scope>NUCLEOTIDE SEQUENCE [MRNA]</scope>
    <source>
        <tissue>Pituitary</tissue>
    </source>
</reference>
<proteinExistence type="evidence at transcript level"/>
<evidence type="ECO:0000250" key="1">
    <source>
        <dbReference type="UniProtKB" id="P01193"/>
    </source>
</evidence>
<evidence type="ECO:0000255" key="2"/>
<evidence type="ECO:0000256" key="3">
    <source>
        <dbReference type="SAM" id="MobiDB-lite"/>
    </source>
</evidence>
<evidence type="ECO:0000305" key="4"/>
<organism>
    <name type="scientific">Thunnus obesus</name>
    <name type="common">Bigeye tuna</name>
    <dbReference type="NCBI Taxonomy" id="8241"/>
    <lineage>
        <taxon>Eukaryota</taxon>
        <taxon>Metazoa</taxon>
        <taxon>Chordata</taxon>
        <taxon>Craniata</taxon>
        <taxon>Vertebrata</taxon>
        <taxon>Euteleostomi</taxon>
        <taxon>Actinopterygii</taxon>
        <taxon>Neopterygii</taxon>
        <taxon>Teleostei</taxon>
        <taxon>Neoteleostei</taxon>
        <taxon>Acanthomorphata</taxon>
        <taxon>Pelagiaria</taxon>
        <taxon>Scombriformes</taxon>
        <taxon>Scombridae</taxon>
        <taxon>Thunnus</taxon>
    </lineage>
</organism>